<organism>
    <name type="scientific">Coxiella burnetii (strain RSA 331 / Henzerling II)</name>
    <dbReference type="NCBI Taxonomy" id="360115"/>
    <lineage>
        <taxon>Bacteria</taxon>
        <taxon>Pseudomonadati</taxon>
        <taxon>Pseudomonadota</taxon>
        <taxon>Gammaproteobacteria</taxon>
        <taxon>Legionellales</taxon>
        <taxon>Coxiellaceae</taxon>
        <taxon>Coxiella</taxon>
    </lineage>
</organism>
<sequence length="117" mass="13106">MDKQEKRIRRARRTRAKIKELGAVRLCVHRSLNHIYAQLISPRDSKVLVCASTLEKEVRSQIKHGGNIQAATAIGKLIAQRAKKAGVTKVAFDRSGYKYHGRVRALAEAVREGGIEF</sequence>
<reference key="1">
    <citation type="submission" date="2007-11" db="EMBL/GenBank/DDBJ databases">
        <title>Genome sequencing of phylogenetically and phenotypically diverse Coxiella burnetii isolates.</title>
        <authorList>
            <person name="Seshadri R."/>
            <person name="Samuel J.E."/>
        </authorList>
    </citation>
    <scope>NUCLEOTIDE SEQUENCE [LARGE SCALE GENOMIC DNA]</scope>
    <source>
        <strain>RSA 331 / Henzerling II</strain>
    </source>
</reference>
<protein>
    <recommendedName>
        <fullName evidence="1">Large ribosomal subunit protein uL18</fullName>
    </recommendedName>
    <alternativeName>
        <fullName evidence="2">50S ribosomal protein L18</fullName>
    </alternativeName>
</protein>
<feature type="chain" id="PRO_1000086661" description="Large ribosomal subunit protein uL18">
    <location>
        <begin position="1"/>
        <end position="117"/>
    </location>
</feature>
<name>RL18_COXBR</name>
<comment type="function">
    <text evidence="1">This is one of the proteins that bind and probably mediate the attachment of the 5S RNA into the large ribosomal subunit, where it forms part of the central protuberance.</text>
</comment>
<comment type="subunit">
    <text evidence="1">Part of the 50S ribosomal subunit; part of the 5S rRNA/L5/L18/L25 subcomplex. Contacts the 5S and 23S rRNAs.</text>
</comment>
<comment type="similarity">
    <text evidence="1">Belongs to the universal ribosomal protein uL18 family.</text>
</comment>
<keyword id="KW-0687">Ribonucleoprotein</keyword>
<keyword id="KW-0689">Ribosomal protein</keyword>
<keyword id="KW-0694">RNA-binding</keyword>
<keyword id="KW-0699">rRNA-binding</keyword>
<dbReference type="EMBL" id="CP000890">
    <property type="protein sequence ID" value="ABX77461.1"/>
    <property type="molecule type" value="Genomic_DNA"/>
</dbReference>
<dbReference type="RefSeq" id="WP_005771517.1">
    <property type="nucleotide sequence ID" value="NC_010117.1"/>
</dbReference>
<dbReference type="SMR" id="A9NAY6"/>
<dbReference type="KEGG" id="cbs:COXBURSA331_A0353"/>
<dbReference type="HOGENOM" id="CLU_098841_0_1_6"/>
<dbReference type="GO" id="GO:0022625">
    <property type="term" value="C:cytosolic large ribosomal subunit"/>
    <property type="evidence" value="ECO:0007669"/>
    <property type="project" value="TreeGrafter"/>
</dbReference>
<dbReference type="GO" id="GO:0008097">
    <property type="term" value="F:5S rRNA binding"/>
    <property type="evidence" value="ECO:0007669"/>
    <property type="project" value="TreeGrafter"/>
</dbReference>
<dbReference type="GO" id="GO:0003735">
    <property type="term" value="F:structural constituent of ribosome"/>
    <property type="evidence" value="ECO:0007669"/>
    <property type="project" value="InterPro"/>
</dbReference>
<dbReference type="GO" id="GO:0006412">
    <property type="term" value="P:translation"/>
    <property type="evidence" value="ECO:0007669"/>
    <property type="project" value="UniProtKB-UniRule"/>
</dbReference>
<dbReference type="CDD" id="cd00432">
    <property type="entry name" value="Ribosomal_L18_L5e"/>
    <property type="match status" value="1"/>
</dbReference>
<dbReference type="FunFam" id="3.30.420.100:FF:000001">
    <property type="entry name" value="50S ribosomal protein L18"/>
    <property type="match status" value="1"/>
</dbReference>
<dbReference type="Gene3D" id="3.30.420.100">
    <property type="match status" value="1"/>
</dbReference>
<dbReference type="HAMAP" id="MF_01337_B">
    <property type="entry name" value="Ribosomal_uL18_B"/>
    <property type="match status" value="1"/>
</dbReference>
<dbReference type="InterPro" id="IPR004389">
    <property type="entry name" value="Ribosomal_uL18_bac-type"/>
</dbReference>
<dbReference type="InterPro" id="IPR005484">
    <property type="entry name" value="Ribosomal_uL18_bac/euk"/>
</dbReference>
<dbReference type="NCBIfam" id="TIGR00060">
    <property type="entry name" value="L18_bact"/>
    <property type="match status" value="1"/>
</dbReference>
<dbReference type="PANTHER" id="PTHR12899">
    <property type="entry name" value="39S RIBOSOMAL PROTEIN L18, MITOCHONDRIAL"/>
    <property type="match status" value="1"/>
</dbReference>
<dbReference type="PANTHER" id="PTHR12899:SF3">
    <property type="entry name" value="LARGE RIBOSOMAL SUBUNIT PROTEIN UL18M"/>
    <property type="match status" value="1"/>
</dbReference>
<dbReference type="Pfam" id="PF00861">
    <property type="entry name" value="Ribosomal_L18p"/>
    <property type="match status" value="1"/>
</dbReference>
<dbReference type="SUPFAM" id="SSF53137">
    <property type="entry name" value="Translational machinery components"/>
    <property type="match status" value="1"/>
</dbReference>
<evidence type="ECO:0000255" key="1">
    <source>
        <dbReference type="HAMAP-Rule" id="MF_01337"/>
    </source>
</evidence>
<evidence type="ECO:0000305" key="2"/>
<accession>A9NAY6</accession>
<proteinExistence type="inferred from homology"/>
<gene>
    <name evidence="1" type="primary">rplR</name>
    <name type="ordered locus">COXBURSA331_A0353</name>
</gene>